<organism>
    <name type="scientific">Actinobacillus pleuropneumoniae serotype 5b (strain L20)</name>
    <dbReference type="NCBI Taxonomy" id="416269"/>
    <lineage>
        <taxon>Bacteria</taxon>
        <taxon>Pseudomonadati</taxon>
        <taxon>Pseudomonadota</taxon>
        <taxon>Gammaproteobacteria</taxon>
        <taxon>Pasteurellales</taxon>
        <taxon>Pasteurellaceae</taxon>
        <taxon>Actinobacillus</taxon>
    </lineage>
</organism>
<feature type="chain" id="PRO_0000332554" description="Ribonuclease H">
    <location>
        <begin position="1"/>
        <end position="153"/>
    </location>
</feature>
<feature type="domain" description="RNase H type-1" evidence="2">
    <location>
        <begin position="1"/>
        <end position="141"/>
    </location>
</feature>
<feature type="binding site" evidence="1">
    <location>
        <position position="9"/>
    </location>
    <ligand>
        <name>Mg(2+)</name>
        <dbReference type="ChEBI" id="CHEBI:18420"/>
        <label>1</label>
    </ligand>
</feature>
<feature type="binding site" evidence="1">
    <location>
        <position position="9"/>
    </location>
    <ligand>
        <name>Mg(2+)</name>
        <dbReference type="ChEBI" id="CHEBI:18420"/>
        <label>2</label>
    </ligand>
</feature>
<feature type="binding site" evidence="1">
    <location>
        <position position="47"/>
    </location>
    <ligand>
        <name>Mg(2+)</name>
        <dbReference type="ChEBI" id="CHEBI:18420"/>
        <label>1</label>
    </ligand>
</feature>
<feature type="binding site" evidence="1">
    <location>
        <position position="69"/>
    </location>
    <ligand>
        <name>Mg(2+)</name>
        <dbReference type="ChEBI" id="CHEBI:18420"/>
        <label>1</label>
    </ligand>
</feature>
<feature type="binding site" evidence="1">
    <location>
        <position position="133"/>
    </location>
    <ligand>
        <name>Mg(2+)</name>
        <dbReference type="ChEBI" id="CHEBI:18420"/>
        <label>2</label>
    </ligand>
</feature>
<name>RNH_ACTP2</name>
<accession>A3MZE1</accession>
<protein>
    <recommendedName>
        <fullName evidence="1">Ribonuclease H</fullName>
        <shortName evidence="1">RNase H</shortName>
        <ecNumber evidence="1">3.1.26.4</ecNumber>
    </recommendedName>
</protein>
<keyword id="KW-0963">Cytoplasm</keyword>
<keyword id="KW-0255">Endonuclease</keyword>
<keyword id="KW-0378">Hydrolase</keyword>
<keyword id="KW-0460">Magnesium</keyword>
<keyword id="KW-0479">Metal-binding</keyword>
<keyword id="KW-0540">Nuclease</keyword>
<keyword id="KW-1185">Reference proteome</keyword>
<evidence type="ECO:0000255" key="1">
    <source>
        <dbReference type="HAMAP-Rule" id="MF_00042"/>
    </source>
</evidence>
<evidence type="ECO:0000255" key="2">
    <source>
        <dbReference type="PROSITE-ProRule" id="PRU00408"/>
    </source>
</evidence>
<gene>
    <name evidence="1" type="primary">rnhA</name>
    <name type="ordered locus">APL_0423</name>
</gene>
<dbReference type="EC" id="3.1.26.4" evidence="1"/>
<dbReference type="EMBL" id="CP000569">
    <property type="protein sequence ID" value="ABN73527.1"/>
    <property type="molecule type" value="Genomic_DNA"/>
</dbReference>
<dbReference type="RefSeq" id="WP_005607173.1">
    <property type="nucleotide sequence ID" value="NC_009053.1"/>
</dbReference>
<dbReference type="SMR" id="A3MZE1"/>
<dbReference type="STRING" id="416269.APL_0423"/>
<dbReference type="EnsemblBacteria" id="ABN73527">
    <property type="protein sequence ID" value="ABN73527"/>
    <property type="gene ID" value="APL_0423"/>
</dbReference>
<dbReference type="KEGG" id="apl:APL_0423"/>
<dbReference type="eggNOG" id="COG0328">
    <property type="taxonomic scope" value="Bacteria"/>
</dbReference>
<dbReference type="HOGENOM" id="CLU_030894_6_0_6"/>
<dbReference type="Proteomes" id="UP000001432">
    <property type="component" value="Chromosome"/>
</dbReference>
<dbReference type="GO" id="GO:0005737">
    <property type="term" value="C:cytoplasm"/>
    <property type="evidence" value="ECO:0007669"/>
    <property type="project" value="UniProtKB-SubCell"/>
</dbReference>
<dbReference type="GO" id="GO:0000287">
    <property type="term" value="F:magnesium ion binding"/>
    <property type="evidence" value="ECO:0007669"/>
    <property type="project" value="UniProtKB-UniRule"/>
</dbReference>
<dbReference type="GO" id="GO:0003676">
    <property type="term" value="F:nucleic acid binding"/>
    <property type="evidence" value="ECO:0007669"/>
    <property type="project" value="InterPro"/>
</dbReference>
<dbReference type="GO" id="GO:0004523">
    <property type="term" value="F:RNA-DNA hybrid ribonuclease activity"/>
    <property type="evidence" value="ECO:0007669"/>
    <property type="project" value="UniProtKB-UniRule"/>
</dbReference>
<dbReference type="GO" id="GO:0043137">
    <property type="term" value="P:DNA replication, removal of RNA primer"/>
    <property type="evidence" value="ECO:0007669"/>
    <property type="project" value="TreeGrafter"/>
</dbReference>
<dbReference type="CDD" id="cd09278">
    <property type="entry name" value="RNase_HI_prokaryote_like"/>
    <property type="match status" value="1"/>
</dbReference>
<dbReference type="FunFam" id="3.30.420.10:FF:000008">
    <property type="entry name" value="Ribonuclease H"/>
    <property type="match status" value="1"/>
</dbReference>
<dbReference type="Gene3D" id="3.30.420.10">
    <property type="entry name" value="Ribonuclease H-like superfamily/Ribonuclease H"/>
    <property type="match status" value="1"/>
</dbReference>
<dbReference type="HAMAP" id="MF_00042">
    <property type="entry name" value="RNase_H"/>
    <property type="match status" value="1"/>
</dbReference>
<dbReference type="InterPro" id="IPR050092">
    <property type="entry name" value="RNase_H"/>
</dbReference>
<dbReference type="InterPro" id="IPR012337">
    <property type="entry name" value="RNaseH-like_sf"/>
</dbReference>
<dbReference type="InterPro" id="IPR002156">
    <property type="entry name" value="RNaseH_domain"/>
</dbReference>
<dbReference type="InterPro" id="IPR036397">
    <property type="entry name" value="RNaseH_sf"/>
</dbReference>
<dbReference type="InterPro" id="IPR022892">
    <property type="entry name" value="RNaseHI"/>
</dbReference>
<dbReference type="NCBIfam" id="NF001236">
    <property type="entry name" value="PRK00203.1"/>
    <property type="match status" value="1"/>
</dbReference>
<dbReference type="PANTHER" id="PTHR10642">
    <property type="entry name" value="RIBONUCLEASE H1"/>
    <property type="match status" value="1"/>
</dbReference>
<dbReference type="PANTHER" id="PTHR10642:SF26">
    <property type="entry name" value="RIBONUCLEASE H1"/>
    <property type="match status" value="1"/>
</dbReference>
<dbReference type="Pfam" id="PF00075">
    <property type="entry name" value="RNase_H"/>
    <property type="match status" value="1"/>
</dbReference>
<dbReference type="SUPFAM" id="SSF53098">
    <property type="entry name" value="Ribonuclease H-like"/>
    <property type="match status" value="1"/>
</dbReference>
<dbReference type="PROSITE" id="PS50879">
    <property type="entry name" value="RNASE_H_1"/>
    <property type="match status" value="1"/>
</dbReference>
<reference key="1">
    <citation type="journal article" date="2008" name="J. Bacteriol.">
        <title>The complete genome sequence of Actinobacillus pleuropneumoniae L20 (serotype 5b).</title>
        <authorList>
            <person name="Foote S.J."/>
            <person name="Bosse J.T."/>
            <person name="Bouevitch A.B."/>
            <person name="Langford P.R."/>
            <person name="Young N.M."/>
            <person name="Nash J.H.E."/>
        </authorList>
    </citation>
    <scope>NUCLEOTIDE SEQUENCE [LARGE SCALE GENOMIC DNA]</scope>
    <source>
        <strain>L20</strain>
    </source>
</reference>
<comment type="function">
    <text evidence="1">Endonuclease that specifically degrades the RNA of RNA-DNA hybrids.</text>
</comment>
<comment type="catalytic activity">
    <reaction evidence="1">
        <text>Endonucleolytic cleavage to 5'-phosphomonoester.</text>
        <dbReference type="EC" id="3.1.26.4"/>
    </reaction>
</comment>
<comment type="cofactor">
    <cofactor evidence="1">
        <name>Mg(2+)</name>
        <dbReference type="ChEBI" id="CHEBI:18420"/>
    </cofactor>
    <text evidence="1">Binds 1 Mg(2+) ion per subunit. May bind a second metal ion at a regulatory site, or after substrate binding.</text>
</comment>
<comment type="subunit">
    <text evidence="1">Monomer.</text>
</comment>
<comment type="subcellular location">
    <subcellularLocation>
        <location evidence="1">Cytoplasm</location>
    </subcellularLocation>
</comment>
<comment type="similarity">
    <text evidence="1">Belongs to the RNase H family.</text>
</comment>
<sequence length="153" mass="17386">MKLVEIFTDGSCLGNPGKGGIGIVLRYNGHEKQVSKGYLQTTNNRMELRAVIEALAMLKEPCQVQLNSDSQYMKDGITKWIFSWKKNNWKTANGKPVKNKELWIALDQEIQRHKIEWTWVKGHSGHRENEICDELAKAGANNPTLEDIGYNAD</sequence>
<proteinExistence type="inferred from homology"/>